<dbReference type="EMBL" id="AB028148">
    <property type="protein sequence ID" value="BAC45005.1"/>
    <property type="molecule type" value="mRNA"/>
</dbReference>
<dbReference type="EMBL" id="AK075757">
    <property type="protein sequence ID" value="BAC35935.1"/>
    <property type="molecule type" value="mRNA"/>
</dbReference>
<dbReference type="EMBL" id="BC037088">
    <property type="protein sequence ID" value="AAH37088.1"/>
    <property type="status" value="ALT_INIT"/>
    <property type="molecule type" value="mRNA"/>
</dbReference>
<dbReference type="CCDS" id="CCDS21463.1"/>
<dbReference type="RefSeq" id="NP_780314.1">
    <property type="nucleotide sequence ID" value="NM_175105.3"/>
</dbReference>
<dbReference type="SMR" id="Q8BHH1"/>
<dbReference type="FunCoup" id="Q8BHH1">
    <property type="interactions" value="928"/>
</dbReference>
<dbReference type="STRING" id="10090.ENSMUSP00000146215"/>
<dbReference type="SwissPalm" id="Q8BHH1"/>
<dbReference type="jPOST" id="Q8BHH1"/>
<dbReference type="PaxDb" id="10090-ENSMUSP00000082054"/>
<dbReference type="ProteomicsDB" id="282007"/>
<dbReference type="Antibodypedia" id="48098">
    <property type="antibodies" value="115 antibodies from 26 providers"/>
</dbReference>
<dbReference type="DNASU" id="66333"/>
<dbReference type="Ensembl" id="ENSMUST00000206389.2">
    <property type="protein sequence ID" value="ENSMUSP00000146215.2"/>
    <property type="gene ID" value="ENSMUSG00000042797.10"/>
</dbReference>
<dbReference type="GeneID" id="66333"/>
<dbReference type="KEGG" id="mmu:66333"/>
<dbReference type="UCSC" id="uc009ijs.1">
    <property type="organism name" value="mouse"/>
</dbReference>
<dbReference type="AGR" id="MGI:1913583"/>
<dbReference type="CTD" id="282679"/>
<dbReference type="MGI" id="MGI:1913583">
    <property type="gene designation" value="Aqp11"/>
</dbReference>
<dbReference type="VEuPathDB" id="HostDB:ENSMUSG00000042797"/>
<dbReference type="eggNOG" id="ENOG502S15B">
    <property type="taxonomic scope" value="Eukaryota"/>
</dbReference>
<dbReference type="GeneTree" id="ENSGT00530000063816"/>
<dbReference type="HOGENOM" id="CLU_074449_0_0_1"/>
<dbReference type="InParanoid" id="Q8BHH1"/>
<dbReference type="OMA" id="EHFTVYW"/>
<dbReference type="OrthoDB" id="9894770at2759"/>
<dbReference type="PhylomeDB" id="Q8BHH1"/>
<dbReference type="TreeFam" id="TF320251"/>
<dbReference type="Reactome" id="R-MMU-432047">
    <property type="pathway name" value="Passive transport by Aquaporins"/>
</dbReference>
<dbReference type="BioGRID-ORCS" id="66333">
    <property type="hits" value="2 hits in 77 CRISPR screens"/>
</dbReference>
<dbReference type="ChiTaRS" id="Aqp11">
    <property type="organism name" value="mouse"/>
</dbReference>
<dbReference type="PRO" id="PR:Q8BHH1"/>
<dbReference type="Proteomes" id="UP000000589">
    <property type="component" value="Chromosome 7"/>
</dbReference>
<dbReference type="RNAct" id="Q8BHH1">
    <property type="molecule type" value="protein"/>
</dbReference>
<dbReference type="Bgee" id="ENSMUSG00000042797">
    <property type="expression patterns" value="Expressed in spermatid and 205 other cell types or tissues"/>
</dbReference>
<dbReference type="ExpressionAtlas" id="Q8BHH1">
    <property type="expression patterns" value="baseline and differential"/>
</dbReference>
<dbReference type="GO" id="GO:0009986">
    <property type="term" value="C:cell surface"/>
    <property type="evidence" value="ECO:0007669"/>
    <property type="project" value="Ensembl"/>
</dbReference>
<dbReference type="GO" id="GO:0005737">
    <property type="term" value="C:cytoplasm"/>
    <property type="evidence" value="ECO:0000314"/>
    <property type="project" value="MGI"/>
</dbReference>
<dbReference type="GO" id="GO:0030659">
    <property type="term" value="C:cytoplasmic vesicle membrane"/>
    <property type="evidence" value="ECO:0007669"/>
    <property type="project" value="UniProtKB-SubCell"/>
</dbReference>
<dbReference type="GO" id="GO:0005783">
    <property type="term" value="C:endoplasmic reticulum"/>
    <property type="evidence" value="ECO:0000314"/>
    <property type="project" value="UniProtKB"/>
</dbReference>
<dbReference type="GO" id="GO:0005789">
    <property type="term" value="C:endoplasmic reticulum membrane"/>
    <property type="evidence" value="ECO:0007669"/>
    <property type="project" value="UniProtKB-SubCell"/>
</dbReference>
<dbReference type="GO" id="GO:0005886">
    <property type="term" value="C:plasma membrane"/>
    <property type="evidence" value="ECO:0000314"/>
    <property type="project" value="UniProtKB"/>
</dbReference>
<dbReference type="GO" id="GO:0015254">
    <property type="term" value="F:glycerol channel activity"/>
    <property type="evidence" value="ECO:0000250"/>
    <property type="project" value="UniProtKB"/>
</dbReference>
<dbReference type="GO" id="GO:0140070">
    <property type="term" value="F:hydrogen peroxide channel activity"/>
    <property type="evidence" value="ECO:0007669"/>
    <property type="project" value="Ensembl"/>
</dbReference>
<dbReference type="GO" id="GO:0015250">
    <property type="term" value="F:water channel activity"/>
    <property type="evidence" value="ECO:0000314"/>
    <property type="project" value="UniProtKB"/>
</dbReference>
<dbReference type="GO" id="GO:0048388">
    <property type="term" value="P:endosomal lumen acidification"/>
    <property type="evidence" value="ECO:0000315"/>
    <property type="project" value="MGI"/>
</dbReference>
<dbReference type="GO" id="GO:0015793">
    <property type="term" value="P:glycerol transmembrane transport"/>
    <property type="evidence" value="ECO:0000250"/>
    <property type="project" value="UniProtKB"/>
</dbReference>
<dbReference type="GO" id="GO:0080170">
    <property type="term" value="P:hydrogen peroxide transmembrane transport"/>
    <property type="evidence" value="ECO:0000250"/>
    <property type="project" value="UniProtKB"/>
</dbReference>
<dbReference type="GO" id="GO:0032364">
    <property type="term" value="P:intracellular oxygen homeostasis"/>
    <property type="evidence" value="ECO:0000315"/>
    <property type="project" value="UniProtKB"/>
</dbReference>
<dbReference type="GO" id="GO:0009992">
    <property type="term" value="P:intracellular water homeostasis"/>
    <property type="evidence" value="ECO:0000314"/>
    <property type="project" value="UniProtKB"/>
</dbReference>
<dbReference type="GO" id="GO:0001822">
    <property type="term" value="P:kidney development"/>
    <property type="evidence" value="ECO:0000315"/>
    <property type="project" value="MGI"/>
</dbReference>
<dbReference type="GO" id="GO:0050680">
    <property type="term" value="P:negative regulation of epithelial cell proliferation"/>
    <property type="evidence" value="ECO:0000315"/>
    <property type="project" value="UniProtKB"/>
</dbReference>
<dbReference type="GO" id="GO:1904293">
    <property type="term" value="P:negative regulation of ERAD pathway"/>
    <property type="evidence" value="ECO:0000315"/>
    <property type="project" value="UniProtKB"/>
</dbReference>
<dbReference type="GO" id="GO:1903573">
    <property type="term" value="P:negative regulation of response to endoplasmic reticulum stress"/>
    <property type="evidence" value="ECO:0000315"/>
    <property type="project" value="UniProtKB"/>
</dbReference>
<dbReference type="GO" id="GO:0008284">
    <property type="term" value="P:positive regulation of cell population proliferation"/>
    <property type="evidence" value="ECO:0000250"/>
    <property type="project" value="UniProtKB"/>
</dbReference>
<dbReference type="GO" id="GO:0006486">
    <property type="term" value="P:protein glycosylation"/>
    <property type="evidence" value="ECO:0000315"/>
    <property type="project" value="UniProtKB"/>
</dbReference>
<dbReference type="GO" id="GO:0051260">
    <property type="term" value="P:protein homooligomerization"/>
    <property type="evidence" value="ECO:0000314"/>
    <property type="project" value="UniProtKB"/>
</dbReference>
<dbReference type="GO" id="GO:0006612">
    <property type="term" value="P:protein targeting to membrane"/>
    <property type="evidence" value="ECO:0000315"/>
    <property type="project" value="UniProtKB"/>
</dbReference>
<dbReference type="GO" id="GO:0072014">
    <property type="term" value="P:proximal tubule development"/>
    <property type="evidence" value="ECO:0000315"/>
    <property type="project" value="UniProtKB"/>
</dbReference>
<dbReference type="GO" id="GO:0006833">
    <property type="term" value="P:water transport"/>
    <property type="evidence" value="ECO:0000314"/>
    <property type="project" value="MGI"/>
</dbReference>
<dbReference type="FunFam" id="1.20.1080.10:FF:000016">
    <property type="entry name" value="Aquaporin"/>
    <property type="match status" value="1"/>
</dbReference>
<dbReference type="Gene3D" id="1.20.1080.10">
    <property type="entry name" value="Glycerol uptake facilitator protein"/>
    <property type="match status" value="1"/>
</dbReference>
<dbReference type="InterPro" id="IPR051883">
    <property type="entry name" value="AQP11/12_channel"/>
</dbReference>
<dbReference type="InterPro" id="IPR023271">
    <property type="entry name" value="Aquaporin-like"/>
</dbReference>
<dbReference type="InterPro" id="IPR023266">
    <property type="entry name" value="Aquaporin_11"/>
</dbReference>
<dbReference type="InterPro" id="IPR016697">
    <property type="entry name" value="Aquaporin_11/12"/>
</dbReference>
<dbReference type="InterPro" id="IPR000425">
    <property type="entry name" value="MIP"/>
</dbReference>
<dbReference type="PANTHER" id="PTHR21191">
    <property type="entry name" value="AQUAPORIN"/>
    <property type="match status" value="1"/>
</dbReference>
<dbReference type="PANTHER" id="PTHR21191:SF7">
    <property type="entry name" value="AQUAPORIN-11"/>
    <property type="match status" value="1"/>
</dbReference>
<dbReference type="Pfam" id="PF00230">
    <property type="entry name" value="MIP"/>
    <property type="match status" value="1"/>
</dbReference>
<dbReference type="PIRSF" id="PIRSF017529">
    <property type="entry name" value="Aquaporin_11/12"/>
    <property type="match status" value="1"/>
</dbReference>
<dbReference type="PRINTS" id="PR02024">
    <property type="entry name" value="AQUAPORIN11"/>
</dbReference>
<dbReference type="PRINTS" id="PR00783">
    <property type="entry name" value="MINTRINSICP"/>
</dbReference>
<dbReference type="SUPFAM" id="SSF81338">
    <property type="entry name" value="Aquaporin-like"/>
    <property type="match status" value="1"/>
</dbReference>
<keyword id="KW-1003">Cell membrane</keyword>
<keyword id="KW-0968">Cytoplasmic vesicle</keyword>
<keyword id="KW-1015">Disulfide bond</keyword>
<keyword id="KW-0256">Endoplasmic reticulum</keyword>
<keyword id="KW-0472">Membrane</keyword>
<keyword id="KW-1185">Reference proteome</keyword>
<keyword id="KW-0677">Repeat</keyword>
<keyword id="KW-0812">Transmembrane</keyword>
<keyword id="KW-1133">Transmembrane helix</keyword>
<keyword id="KW-0813">Transport</keyword>
<comment type="function">
    <text evidence="5 6 7 9 10 11 12 13 16 17">Channel protein that facilitates the transport of water, glycerol and hydrogen peroxide across membrane of cell or organelles guaranteeing intracellular homeostasis in several organes like liver, kidney and brain (PubMed:21118806, PubMed:21251984). In situation of stress, participates in endoplasmic reticulum (ER) homeostasis by regulating redox homeostasis through the transport of hydrogen peroxide across the endoplasmic reticulum membrane thereby regulating the oxidative stress through the NADPH oxidase 2 pathway (PubMed:23275615, PubMed:30656220). Plays a role by maintaining an environment suitable for translation or protein foldings in the ER lumen namely by participating in the PKD1 glycosylation processing resulting in regulation of PKD1 membrane trafficking thereby preventing the accumulation of unfolding protein in ER (PubMed:18606867, PubMed:24854278). Plays a role in the proximal tubule function by regulating its endosomal acidification (PubMed:16107722). May play a role in postnatal kidney development (PubMed:18701606, PubMed:23486012, PubMed:27582095).</text>
</comment>
<comment type="catalytic activity">
    <reaction evidence="9 10">
        <text>H2O(in) = H2O(out)</text>
        <dbReference type="Rhea" id="RHEA:29667"/>
        <dbReference type="ChEBI" id="CHEBI:15377"/>
    </reaction>
</comment>
<comment type="catalytic activity">
    <reaction evidence="2">
        <text>glycerol(in) = glycerol(out)</text>
        <dbReference type="Rhea" id="RHEA:29675"/>
        <dbReference type="ChEBI" id="CHEBI:17754"/>
    </reaction>
</comment>
<comment type="catalytic activity">
    <reaction evidence="2">
        <text>H2O2(out) = H2O2(in)</text>
        <dbReference type="Rhea" id="RHEA:74375"/>
        <dbReference type="ChEBI" id="CHEBI:16240"/>
    </reaction>
</comment>
<comment type="subunit">
    <text evidence="2 5 19">Homodimer; disulfide-linked (PubMed:16107722, PubMed:21118806). Homotetramer (By similarity). Can also form homomultimer (PubMed:21118806).</text>
</comment>
<comment type="subcellular location">
    <subcellularLocation>
        <location evidence="5 9 13">Endoplasmic reticulum membrane</location>
        <topology evidence="2">Multi-pass membrane protein</topology>
    </subcellularLocation>
    <subcellularLocation>
        <location evidence="2">Cytoplasmic vesicle membrane</location>
        <topology evidence="2">Multi-pass membrane protein</topology>
    </subcellularLocation>
    <subcellularLocation>
        <location evidence="1">Cell membrane</location>
        <topology evidence="2">Multi-pass membrane protein</topology>
    </subcellularLocation>
    <text evidence="2">Localizes mainly to the periphery of lipid droplets. Localizes to cytoplasmic vesicles in maturing spermatozoa. It accumulates partly in mitochondrial-associated endoplasmic reticulum membranes.</text>
</comment>
<comment type="tissue specificity">
    <text evidence="5 8 12 14 15">Highly expressed in the S1 proximal tubule segment, (PubMed:23486012). Expressed in the testis, kidney, and liver. Weakly expressed in the heart, brain, and muscle. Highly expressed in the testis. Expressed in the proximal tubule of the cortex of 8-day-old mouse kidney (PubMed:16107722). Expressed in retina specifically at retinal Mueller glial cells (PubMed:27107718). Expressed in brain. Expressed abundantly at the choroid plexus but also expressed weakly in the parenchyma. Expressed at the capillary endothelium in the cerebral white matter (PubMed:27258268). Expressed in adult testis, in the elongated spermatids (ES) and in residual bodies inside Sertoli cells (PubMed:19812234).</text>
</comment>
<comment type="developmental stage">
    <text evidence="15">Mainly expressed at the brain surface with a slight expression in the brain parenchyma at postnatal day 1, 7, and 14. At the stage of postnatal day 28, mainly expressed in the parenchyma.</text>
</comment>
<comment type="induction">
    <text evidence="12">Increased by glucose (PubMed:23486012). Decreased by phlorizin (PubMed:23486012).</text>
</comment>
<comment type="domain">
    <text evidence="9">The NPC motif is essential for oligomerization and water permeability function.</text>
</comment>
<comment type="PTM">
    <text evidence="2">Not glycosylated.</text>
</comment>
<comment type="disruption phenotype">
    <text evidence="5 7 11 16">Homozygous Aqp11 knockout mice are born normally at the expected Mendelian frequency and are normal. However, after 15 days mice begin dying, and only 15% survive until day 60. Mice exhibit severe renal dysfunction with a significant increase of blood urea nitrogen (BUN) level. The kidneys are large and pale with rough texture occupying the whole abdominal cavity. The kidneys are anemic and polycystic following swelling and vacuolization of the proximal tubule (PubMed:16107722, PubMed:18701606). Mice with conditional knockout of Aqp11 in liver appear to have a normal life span of more than 1 year, are fertile (both females and males), show a normal growth rate, and do not show any behavioral abnormalities. Unchallenged mice have normal longevity, their livers appear normal, and reveal only a minor defect in lipid handling. In contrast, rough endoplasmic reticulum (RER)-derived vacuoles develop rapidly in the periportal hepatocytes of liver-specific following 24 hours of fasting and refeeding (PubMed:23275615). Mice with temporal conditional knockout of Aqp11 between post natal days (P) P2 and P12 exhibit apparently normal kidneys at birth and within the first two postnatal weeks of life exhibit tubular dilations. When conditional knockout of Aqp11 is induced until P8, proximal tubule (PT) cell vacuolization and apparent tubular cysts are formed, whereas no deficient renal development are observed if conditional knockout of Aqp11 starts at P12 (PubMed:27582095).</text>
</comment>
<comment type="similarity">
    <text evidence="18">Belongs to the MIP/aquaporin (TC 1.A.8) family. AQP11/AQP12 subfamily.</text>
</comment>
<comment type="sequence caution" evidence="18">
    <conflict type="erroneous initiation">
        <sequence resource="EMBL-CDS" id="AAH37088"/>
    </conflict>
</comment>
<evidence type="ECO:0000250" key="1">
    <source>
        <dbReference type="UniProtKB" id="F6S3G9"/>
    </source>
</evidence>
<evidence type="ECO:0000250" key="2">
    <source>
        <dbReference type="UniProtKB" id="Q8NBQ7"/>
    </source>
</evidence>
<evidence type="ECO:0000250" key="3">
    <source>
        <dbReference type="UniProtKB" id="Q96PS8"/>
    </source>
</evidence>
<evidence type="ECO:0000255" key="4"/>
<evidence type="ECO:0000269" key="5">
    <source>
    </source>
</evidence>
<evidence type="ECO:0000269" key="6">
    <source>
    </source>
</evidence>
<evidence type="ECO:0000269" key="7">
    <source>
    </source>
</evidence>
<evidence type="ECO:0000269" key="8">
    <source>
    </source>
</evidence>
<evidence type="ECO:0000269" key="9">
    <source>
    </source>
</evidence>
<evidence type="ECO:0000269" key="10">
    <source>
    </source>
</evidence>
<evidence type="ECO:0000269" key="11">
    <source>
    </source>
</evidence>
<evidence type="ECO:0000269" key="12">
    <source>
    </source>
</evidence>
<evidence type="ECO:0000269" key="13">
    <source>
    </source>
</evidence>
<evidence type="ECO:0000269" key="14">
    <source>
    </source>
</evidence>
<evidence type="ECO:0000269" key="15">
    <source>
    </source>
</evidence>
<evidence type="ECO:0000269" key="16">
    <source>
    </source>
</evidence>
<evidence type="ECO:0000269" key="17">
    <source>
    </source>
</evidence>
<evidence type="ECO:0000305" key="18"/>
<evidence type="ECO:0000305" key="19">
    <source>
    </source>
</evidence>
<evidence type="ECO:0000305" key="20">
    <source ref="1"/>
</evidence>
<evidence type="ECO:0000312" key="21">
    <source>
        <dbReference type="MGI" id="MGI:1913583"/>
    </source>
</evidence>
<accession>Q8BHH1</accession>
<accession>Q8JZU1</accession>
<protein>
    <recommendedName>
        <fullName evidence="20">Aquaporin-11</fullName>
        <shortName evidence="20">AQP-11</shortName>
    </recommendedName>
</protein>
<proteinExistence type="evidence at protein level"/>
<sequence>MSALLGLRPEVQDTCISLGLMLLFVLFVGLARVIARQQLHRPVVHAFVLEFLATFQLCCCTHELQVLSEQDSAHPTWTLTLIYFFSLVHGLTLVGTASNPCGVMMQMILGGMSPEMGAVRLLAQLVSALCSRYCISALWSLSLTKYHYDERILACRNPIHTDMSKAIIIEAICSFIFHSALLHFQEVRTKLRIHLLAALITFLAYAGGSLTGALFNPALALSLHFPCFDELFYKFFVVYWLAPSVGVLMMILMFSFFLPWLHNNQMTNKKE</sequence>
<gene>
    <name evidence="21" type="primary">Aqp11</name>
</gene>
<name>AQP11_MOUSE</name>
<feature type="chain" id="PRO_0000063969" description="Aquaporin-11">
    <location>
        <begin position="1"/>
        <end position="271"/>
    </location>
</feature>
<feature type="topological domain" description="Cytoplasmic" evidence="2">
    <location>
        <begin position="1"/>
        <end position="14"/>
    </location>
</feature>
<feature type="transmembrane region" description="Helical" evidence="4">
    <location>
        <begin position="15"/>
        <end position="35"/>
    </location>
</feature>
<feature type="topological domain" description="Lumenal" evidence="2">
    <location>
        <begin position="36"/>
        <end position="41"/>
    </location>
</feature>
<feature type="transmembrane region" description="Helical" evidence="4">
    <location>
        <begin position="42"/>
        <end position="62"/>
    </location>
</feature>
<feature type="topological domain" description="Cytoplasmic" evidence="2">
    <location>
        <begin position="63"/>
        <end position="76"/>
    </location>
</feature>
<feature type="transmembrane region" description="Helical" evidence="4">
    <location>
        <begin position="77"/>
        <end position="97"/>
    </location>
</feature>
<feature type="topological domain" description="Lumenal" evidence="2">
    <location>
        <begin position="98"/>
        <end position="166"/>
    </location>
</feature>
<feature type="transmembrane region" description="Helical" evidence="4">
    <location>
        <begin position="167"/>
        <end position="187"/>
    </location>
</feature>
<feature type="topological domain" description="Cytoplasmic" evidence="2">
    <location>
        <begin position="188"/>
        <end position="194"/>
    </location>
</feature>
<feature type="transmembrane region" description="Helical" evidence="4">
    <location>
        <begin position="195"/>
        <end position="215"/>
    </location>
</feature>
<feature type="topological domain" description="Lumenal" evidence="2">
    <location>
        <begin position="216"/>
        <end position="234"/>
    </location>
</feature>
<feature type="transmembrane region" description="Helical" evidence="4">
    <location>
        <begin position="235"/>
        <end position="255"/>
    </location>
</feature>
<feature type="topological domain" description="Cytoplasmic" evidence="2">
    <location>
        <begin position="256"/>
        <end position="271"/>
    </location>
</feature>
<feature type="short sequence motif" description="NPC" evidence="3">
    <location>
        <begin position="99"/>
        <end position="101"/>
    </location>
</feature>
<feature type="short sequence motif" description="NPA" evidence="3">
    <location>
        <begin position="216"/>
        <end position="218"/>
    </location>
</feature>
<feature type="mutagenesis site" description="Reduces oligomerization." evidence="12">
    <original>N</original>
    <variation>D</variation>
    <location>
        <position position="99"/>
    </location>
</feature>
<feature type="mutagenesis site" description="Does not affect endoplasmic reticulum localization. Does not affect plama membrane localization. Reduces oligomerization. Impairs water permeability." evidence="9">
    <original>C</original>
    <variation>A</variation>
    <location>
        <position position="101"/>
    </location>
</feature>
<feature type="mutagenesis site" description="Does not affect oligomerization formation." evidence="12">
    <original>G</original>
    <variation>V</variation>
    <location>
        <position position="102"/>
    </location>
</feature>
<feature type="mutagenesis site" description="Homozygous sudden juvenile death syndrome (sjds) mice die before 20 day of age and exhibit severe proximal tubule injury and formation of giant vacuoles in the renal cortex. Interferes with maintenance of AQP11 oligomeric structure. Aqp11 mutant mice developed proximal tubule (PT)-specific mitochondrial injury. Heterozygous sudden juvenile death syndrome (sjds) mice exhibit higher AQP11 levels but are not further increased in response to glucose. Upon glucose treatment, heterozygous Aqp11 mice show increased blood urea nitrogen levels that are prevented by the antioxidant sulforaphane or by phlorizin." evidence="7">
    <original>C</original>
    <variation>S</variation>
    <location>
        <position position="227"/>
    </location>
</feature>
<organism>
    <name type="scientific">Mus musculus</name>
    <name type="common">Mouse</name>
    <dbReference type="NCBI Taxonomy" id="10090"/>
    <lineage>
        <taxon>Eukaryota</taxon>
        <taxon>Metazoa</taxon>
        <taxon>Chordata</taxon>
        <taxon>Craniata</taxon>
        <taxon>Vertebrata</taxon>
        <taxon>Euteleostomi</taxon>
        <taxon>Mammalia</taxon>
        <taxon>Eutheria</taxon>
        <taxon>Euarchontoglires</taxon>
        <taxon>Glires</taxon>
        <taxon>Rodentia</taxon>
        <taxon>Myomorpha</taxon>
        <taxon>Muroidea</taxon>
        <taxon>Muridae</taxon>
        <taxon>Murinae</taxon>
        <taxon>Mus</taxon>
        <taxon>Mus</taxon>
    </lineage>
</organism>
<reference key="1">
    <citation type="submission" date="1999-05" db="EMBL/GenBank/DDBJ databases">
        <title>Cloning of a new superfamily of aquaporin.</title>
        <authorList>
            <person name="Ishibashi K."/>
        </authorList>
    </citation>
    <scope>NUCLEOTIDE SEQUENCE [MRNA]</scope>
    <source>
        <tissue>Testis</tissue>
    </source>
</reference>
<reference key="2">
    <citation type="journal article" date="2005" name="Science">
        <title>The transcriptional landscape of the mammalian genome.</title>
        <authorList>
            <person name="Carninci P."/>
            <person name="Kasukawa T."/>
            <person name="Katayama S."/>
            <person name="Gough J."/>
            <person name="Frith M.C."/>
            <person name="Maeda N."/>
            <person name="Oyama R."/>
            <person name="Ravasi T."/>
            <person name="Lenhard B."/>
            <person name="Wells C."/>
            <person name="Kodzius R."/>
            <person name="Shimokawa K."/>
            <person name="Bajic V.B."/>
            <person name="Brenner S.E."/>
            <person name="Batalov S."/>
            <person name="Forrest A.R."/>
            <person name="Zavolan M."/>
            <person name="Davis M.J."/>
            <person name="Wilming L.G."/>
            <person name="Aidinis V."/>
            <person name="Allen J.E."/>
            <person name="Ambesi-Impiombato A."/>
            <person name="Apweiler R."/>
            <person name="Aturaliya R.N."/>
            <person name="Bailey T.L."/>
            <person name="Bansal M."/>
            <person name="Baxter L."/>
            <person name="Beisel K.W."/>
            <person name="Bersano T."/>
            <person name="Bono H."/>
            <person name="Chalk A.M."/>
            <person name="Chiu K.P."/>
            <person name="Choudhary V."/>
            <person name="Christoffels A."/>
            <person name="Clutterbuck D.R."/>
            <person name="Crowe M.L."/>
            <person name="Dalla E."/>
            <person name="Dalrymple B.P."/>
            <person name="de Bono B."/>
            <person name="Della Gatta G."/>
            <person name="di Bernardo D."/>
            <person name="Down T."/>
            <person name="Engstrom P."/>
            <person name="Fagiolini M."/>
            <person name="Faulkner G."/>
            <person name="Fletcher C.F."/>
            <person name="Fukushima T."/>
            <person name="Furuno M."/>
            <person name="Futaki S."/>
            <person name="Gariboldi M."/>
            <person name="Georgii-Hemming P."/>
            <person name="Gingeras T.R."/>
            <person name="Gojobori T."/>
            <person name="Green R.E."/>
            <person name="Gustincich S."/>
            <person name="Harbers M."/>
            <person name="Hayashi Y."/>
            <person name="Hensch T.K."/>
            <person name="Hirokawa N."/>
            <person name="Hill D."/>
            <person name="Huminiecki L."/>
            <person name="Iacono M."/>
            <person name="Ikeo K."/>
            <person name="Iwama A."/>
            <person name="Ishikawa T."/>
            <person name="Jakt M."/>
            <person name="Kanapin A."/>
            <person name="Katoh M."/>
            <person name="Kawasawa Y."/>
            <person name="Kelso J."/>
            <person name="Kitamura H."/>
            <person name="Kitano H."/>
            <person name="Kollias G."/>
            <person name="Krishnan S.P."/>
            <person name="Kruger A."/>
            <person name="Kummerfeld S.K."/>
            <person name="Kurochkin I.V."/>
            <person name="Lareau L.F."/>
            <person name="Lazarevic D."/>
            <person name="Lipovich L."/>
            <person name="Liu J."/>
            <person name="Liuni S."/>
            <person name="McWilliam S."/>
            <person name="Madan Babu M."/>
            <person name="Madera M."/>
            <person name="Marchionni L."/>
            <person name="Matsuda H."/>
            <person name="Matsuzawa S."/>
            <person name="Miki H."/>
            <person name="Mignone F."/>
            <person name="Miyake S."/>
            <person name="Morris K."/>
            <person name="Mottagui-Tabar S."/>
            <person name="Mulder N."/>
            <person name="Nakano N."/>
            <person name="Nakauchi H."/>
            <person name="Ng P."/>
            <person name="Nilsson R."/>
            <person name="Nishiguchi S."/>
            <person name="Nishikawa S."/>
            <person name="Nori F."/>
            <person name="Ohara O."/>
            <person name="Okazaki Y."/>
            <person name="Orlando V."/>
            <person name="Pang K.C."/>
            <person name="Pavan W.J."/>
            <person name="Pavesi G."/>
            <person name="Pesole G."/>
            <person name="Petrovsky N."/>
            <person name="Piazza S."/>
            <person name="Reed J."/>
            <person name="Reid J.F."/>
            <person name="Ring B.Z."/>
            <person name="Ringwald M."/>
            <person name="Rost B."/>
            <person name="Ruan Y."/>
            <person name="Salzberg S.L."/>
            <person name="Sandelin A."/>
            <person name="Schneider C."/>
            <person name="Schoenbach C."/>
            <person name="Sekiguchi K."/>
            <person name="Semple C.A."/>
            <person name="Seno S."/>
            <person name="Sessa L."/>
            <person name="Sheng Y."/>
            <person name="Shibata Y."/>
            <person name="Shimada H."/>
            <person name="Shimada K."/>
            <person name="Silva D."/>
            <person name="Sinclair B."/>
            <person name="Sperling S."/>
            <person name="Stupka E."/>
            <person name="Sugiura K."/>
            <person name="Sultana R."/>
            <person name="Takenaka Y."/>
            <person name="Taki K."/>
            <person name="Tammoja K."/>
            <person name="Tan S.L."/>
            <person name="Tang S."/>
            <person name="Taylor M.S."/>
            <person name="Tegner J."/>
            <person name="Teichmann S.A."/>
            <person name="Ueda H.R."/>
            <person name="van Nimwegen E."/>
            <person name="Verardo R."/>
            <person name="Wei C.L."/>
            <person name="Yagi K."/>
            <person name="Yamanishi H."/>
            <person name="Zabarovsky E."/>
            <person name="Zhu S."/>
            <person name="Zimmer A."/>
            <person name="Hide W."/>
            <person name="Bult C."/>
            <person name="Grimmond S.M."/>
            <person name="Teasdale R.D."/>
            <person name="Liu E.T."/>
            <person name="Brusic V."/>
            <person name="Quackenbush J."/>
            <person name="Wahlestedt C."/>
            <person name="Mattick J.S."/>
            <person name="Hume D.A."/>
            <person name="Kai C."/>
            <person name="Sasaki D."/>
            <person name="Tomaru Y."/>
            <person name="Fukuda S."/>
            <person name="Kanamori-Katayama M."/>
            <person name="Suzuki M."/>
            <person name="Aoki J."/>
            <person name="Arakawa T."/>
            <person name="Iida J."/>
            <person name="Imamura K."/>
            <person name="Itoh M."/>
            <person name="Kato T."/>
            <person name="Kawaji H."/>
            <person name="Kawagashira N."/>
            <person name="Kawashima T."/>
            <person name="Kojima M."/>
            <person name="Kondo S."/>
            <person name="Konno H."/>
            <person name="Nakano K."/>
            <person name="Ninomiya N."/>
            <person name="Nishio T."/>
            <person name="Okada M."/>
            <person name="Plessy C."/>
            <person name="Shibata K."/>
            <person name="Shiraki T."/>
            <person name="Suzuki S."/>
            <person name="Tagami M."/>
            <person name="Waki K."/>
            <person name="Watahiki A."/>
            <person name="Okamura-Oho Y."/>
            <person name="Suzuki H."/>
            <person name="Kawai J."/>
            <person name="Hayashizaki Y."/>
        </authorList>
    </citation>
    <scope>NUCLEOTIDE SEQUENCE [LARGE SCALE MRNA]</scope>
    <source>
        <strain>C57BL/6J</strain>
        <tissue>Testis</tissue>
    </source>
</reference>
<reference key="3">
    <citation type="journal article" date="2004" name="Genome Res.">
        <title>The status, quality, and expansion of the NIH full-length cDNA project: the Mammalian Gene Collection (MGC).</title>
        <authorList>
            <consortium name="The MGC Project Team"/>
        </authorList>
    </citation>
    <scope>NUCLEOTIDE SEQUENCE [LARGE SCALE MRNA]</scope>
    <source>
        <tissue>Liver</tissue>
    </source>
</reference>
<reference key="4">
    <citation type="journal article" date="2005" name="Mol. Cell. Biol.">
        <title>Disruption of aquaporin-11 produces polycystic kidneys following vacuolization of the proximal tubule.</title>
        <authorList>
            <person name="Morishita Y."/>
            <person name="Matsuzaki T."/>
            <person name="Hara-chikuma M."/>
            <person name="Andoo A."/>
            <person name="Shimono M."/>
            <person name="Matsuki A."/>
            <person name="Kobayashi K."/>
            <person name="Ikeda M."/>
            <person name="Yamamoto T."/>
            <person name="Verkman A."/>
            <person name="Kusano E."/>
            <person name="Ookawara S."/>
            <person name="Takata K."/>
            <person name="Sasaki S."/>
            <person name="Ishibashi K."/>
        </authorList>
    </citation>
    <scope>DISRUPTION PHENOTYPE</scope>
    <scope>TISSUE SPECIFICITY</scope>
    <scope>SUBUNIT</scope>
    <scope>SUBCELLULAR LOCATION</scope>
</reference>
<reference key="5">
    <citation type="journal article" date="2008" name="FASEB J.">
        <title>Aquaporin-11 knockout mice and polycystic kidney disease animals share a common mechanism of cyst formation.</title>
        <authorList>
            <person name="Okada S."/>
            <person name="Misaka T."/>
            <person name="Tanaka Y."/>
            <person name="Matsumoto I."/>
            <person name="Ishibashi K."/>
            <person name="Sasaki S."/>
            <person name="Abe K."/>
        </authorList>
    </citation>
    <scope>FUNCTION</scope>
</reference>
<reference key="6">
    <citation type="journal article" date="2008" name="J. Am. Soc. Nephrol.">
        <title>Single amino acid substitution in aquaporin 11 causes renal failure.</title>
        <authorList>
            <person name="Tchekneva E.E."/>
            <person name="Khuchua Z."/>
            <person name="Davis L.S."/>
            <person name="Kadkina V."/>
            <person name="Dunn S.R."/>
            <person name="Bachman S."/>
            <person name="Ishibashi K."/>
            <person name="Rinchik E.M."/>
            <person name="Harris R.C."/>
            <person name="Dikov M.M."/>
            <person name="Breyer M.D."/>
        </authorList>
    </citation>
    <scope>DISRUPTION PHENOTYPE</scope>
    <scope>FUNCTION</scope>
    <scope>MUTAGENESIS OF CYS-227</scope>
</reference>
<reference key="7">
    <citation type="journal article" date="2010" name="Cell">
        <title>A tissue-specific atlas of mouse protein phosphorylation and expression.</title>
        <authorList>
            <person name="Huttlin E.L."/>
            <person name="Jedrychowski M.P."/>
            <person name="Elias J.E."/>
            <person name="Goswami T."/>
            <person name="Rad R."/>
            <person name="Beausoleil S.A."/>
            <person name="Villen J."/>
            <person name="Haas W."/>
            <person name="Sowa M.E."/>
            <person name="Gygi S.P."/>
        </authorList>
    </citation>
    <scope>IDENTIFICATION BY MASS SPECTROMETRY [LARGE SCALE ANALYSIS]</scope>
    <source>
        <tissue>Kidney</tissue>
        <tissue>Liver</tissue>
    </source>
</reference>
<reference key="8">
    <citation type="journal article" date="2010" name="Reproduction">
        <title>Aquaporin AQP11 in the testis: molecular identity and association with the processing of residual cytoplasm of elongated spermatids.</title>
        <authorList>
            <person name="Yeung C.H."/>
            <person name="Cooper T.G."/>
        </authorList>
    </citation>
    <scope>TISSUE SPECIFICITY</scope>
</reference>
<reference key="9">
    <citation type="journal article" date="2011" name="J. Biol. Chem.">
        <title>The NPC motif of aquaporin-11, unlike the NPA motif of known aquaporins, is essential for full expression of molecular function.</title>
        <authorList>
            <person name="Ikeda M."/>
            <person name="Andoo A."/>
            <person name="Shimono M."/>
            <person name="Takamatsu N."/>
            <person name="Taki A."/>
            <person name="Muta K."/>
            <person name="Matsushita W."/>
            <person name="Uechi T."/>
            <person name="Matsuzaki T."/>
            <person name="Kenmochi N."/>
            <person name="Takata K."/>
            <person name="Sasaki S."/>
            <person name="Ito K."/>
            <person name="Ishibashi K."/>
        </authorList>
    </citation>
    <scope>FUNCTION</scope>
    <scope>TRANSPORTER ACTIVITY</scope>
    <scope>SUBUNIT</scope>
    <scope>SUBCELLULAR LOCATION</scope>
    <scope>MUTAGENESIS OF CYS-101</scope>
</reference>
<reference key="10">
    <citation type="journal article" date="2011" name="J. Struct. Biol.">
        <title>Water permeability and characterization of aquaporin-11.</title>
        <authorList>
            <person name="Yakata K."/>
            <person name="Tani K."/>
            <person name="Fujiyoshi Y."/>
        </authorList>
    </citation>
    <scope>FUNCTION</scope>
    <scope>TRANSPORTER ACTIVITY</scope>
</reference>
<reference key="11">
    <citation type="journal article" date="2013" name="Am. J. Physiol.">
        <title>Liver-specific Aquaporin 11 knockout mice show rapid vacuolization of the rough endoplasmic reticulum in periportal hepatocytes after amino acid feeding.</title>
        <authorList>
            <person name="Rojek A."/>
            <person name="Fuechtbauer E.M."/>
            <person name="Fuechtbauer A."/>
            <person name="Jelen S."/>
            <person name="Malmendal A."/>
            <person name="Fenton R.A."/>
            <person name="Nielsen S."/>
        </authorList>
    </citation>
    <scope>DISRUPTION PHENOTYPE</scope>
    <scope>FUNCTION</scope>
</reference>
<reference key="12">
    <citation type="journal article" date="2013" name="Am. J. Physiol.">
        <title>Aquaporin 11 insufficiency modulates kidney susceptibility to oxidative stress.</title>
        <authorList>
            <person name="Atochina-Vasserman E.N."/>
            <person name="Biktasova A."/>
            <person name="Abramova E."/>
            <person name="Cheng D.S."/>
            <person name="Polosukhin V.V."/>
            <person name="Tanjore H."/>
            <person name="Takahashi S."/>
            <person name="Sonoda H."/>
            <person name="Foye L."/>
            <person name="Venkov C."/>
            <person name="Ryzhov S.V."/>
            <person name="Novitskiy S."/>
            <person name="Shlonimskaya N."/>
            <person name="Ikeda M."/>
            <person name="Blackwell T.S."/>
            <person name="Lawson W.E."/>
            <person name="Gow A.J."/>
            <person name="Harris R.C."/>
            <person name="Dikov M.M."/>
            <person name="Tchekneva E.E."/>
        </authorList>
    </citation>
    <scope>TISSUE SPECIFICITY</scope>
    <scope>INDUCTION</scope>
    <scope>MUTAGENESIS OF ASN-99; GLY-102 AND CYS-227</scope>
    <scope>FUNCTION</scope>
</reference>
<reference key="13">
    <citation type="journal article" date="2014" name="J. Am. Soc. Nephrol.">
        <title>Aberrant glycosylation and localization of polycystin-1 cause polycystic kidney in an AQP11 knockout model.</title>
        <authorList>
            <person name="Inoue Y."/>
            <person name="Sohara E."/>
            <person name="Kobayashi K."/>
            <person name="Chiga M."/>
            <person name="Rai T."/>
            <person name="Ishibashi K."/>
            <person name="Horie S."/>
            <person name="Su X."/>
            <person name="Zhou J."/>
            <person name="Sasaki S."/>
            <person name="Uchida S."/>
        </authorList>
    </citation>
    <scope>SUBCELLULAR LOCATION</scope>
    <scope>FUNCTION</scope>
</reference>
<reference key="14">
    <citation type="journal article" date="2016" name="Int. J. Mol. Sci.">
        <title>Aquaporin-11 (AQP11) Expression in the Mouse Brain.</title>
        <authorList>
            <person name="Koike S."/>
            <person name="Tanaka Y."/>
            <person name="Matsuzaki T."/>
            <person name="Morishita Y."/>
            <person name="Ishibashi K."/>
        </authorList>
    </citation>
    <scope>TISSUE SPECIFICITY</scope>
    <scope>DEVELOPMENTAL STAGE</scope>
</reference>
<reference key="15">
    <citation type="journal article" date="2016" name="J. Neuroinflamm.">
        <title>Aquaporin 11, a regulator of water efflux at retinal Mueller glial cell surface decreases concomitant with immune-mediated gliosis.</title>
        <authorList>
            <person name="Deeg C.A."/>
            <person name="Amann B."/>
            <person name="Lutz K."/>
            <person name="Hirmer S."/>
            <person name="Lutterberg K."/>
            <person name="Kremmer E."/>
            <person name="Hauck S.M."/>
        </authorList>
    </citation>
    <scope>TISSUE SPECIFICITY</scope>
</reference>
<reference key="16">
    <citation type="journal article" date="2017" name="Am. J. Physiol.">
        <title>Temporal deletion of Aqp11 in mice is linked to the severity of cyst-like disease.</title>
        <authorList>
            <person name="Ruetzler M."/>
            <person name="Rojek A."/>
            <person name="Damgaard M.V."/>
            <person name="Andreasen A."/>
            <person name="Fenton R.A."/>
            <person name="Nielsen S."/>
        </authorList>
    </citation>
    <scope>DISRUPTION PHENOTYPE</scope>
    <scope>FUNCTION</scope>
</reference>
<reference key="17">
    <citation type="journal article" date="2019" name="Biochem. Biophys. Rep.">
        <title>Involvement of the NADPH oxidase 2 pathway in renal oxidative stress in Aqp11-/- mice.</title>
        <authorList>
            <person name="Hoshino Y."/>
            <person name="Sonoda H."/>
            <person name="Nishimura R."/>
            <person name="Mori K."/>
            <person name="Ishibashi K."/>
            <person name="Ikeda M."/>
        </authorList>
    </citation>
    <scope>FUNCTION</scope>
</reference>